<comment type="function">
    <text evidence="1">Catalyzes the formation of 6,7-dimethyl-8-ribityllumazine by condensation of 5-amino-6-(D-ribitylamino)uracil with 3,4-dihydroxy-2-butanone 4-phosphate. This is the penultimate step in the biosynthesis of riboflavin.</text>
</comment>
<comment type="catalytic activity">
    <reaction evidence="1">
        <text>(2S)-2-hydroxy-3-oxobutyl phosphate + 5-amino-6-(D-ribitylamino)uracil = 6,7-dimethyl-8-(1-D-ribityl)lumazine + phosphate + 2 H2O + H(+)</text>
        <dbReference type="Rhea" id="RHEA:26152"/>
        <dbReference type="ChEBI" id="CHEBI:15377"/>
        <dbReference type="ChEBI" id="CHEBI:15378"/>
        <dbReference type="ChEBI" id="CHEBI:15934"/>
        <dbReference type="ChEBI" id="CHEBI:43474"/>
        <dbReference type="ChEBI" id="CHEBI:58201"/>
        <dbReference type="ChEBI" id="CHEBI:58830"/>
        <dbReference type="EC" id="2.5.1.78"/>
    </reaction>
</comment>
<comment type="pathway">
    <text evidence="1">Cofactor biosynthesis; riboflavin biosynthesis; riboflavin from 2-hydroxy-3-oxobutyl phosphate and 5-amino-6-(D-ribitylamino)uracil: step 1/2.</text>
</comment>
<comment type="subunit">
    <text evidence="1">Forms an icosahedral capsid composed of 60 subunits, arranged as a dodecamer of pentamers.</text>
</comment>
<comment type="similarity">
    <text evidence="1">Belongs to the DMRL synthase family.</text>
</comment>
<accession>Q9KCL4</accession>
<gene>
    <name evidence="1" type="primary">ribH</name>
    <name type="ordered locus">BH1557</name>
</gene>
<feature type="chain" id="PRO_0000134714" description="6,7-dimethyl-8-ribityllumazine synthase">
    <location>
        <begin position="1"/>
        <end position="156"/>
    </location>
</feature>
<feature type="active site" description="Proton donor" evidence="1">
    <location>
        <position position="89"/>
    </location>
</feature>
<feature type="binding site" evidence="1">
    <location>
        <position position="23"/>
    </location>
    <ligand>
        <name>5-amino-6-(D-ribitylamino)uracil</name>
        <dbReference type="ChEBI" id="CHEBI:15934"/>
    </ligand>
</feature>
<feature type="binding site" evidence="1">
    <location>
        <begin position="57"/>
        <end position="59"/>
    </location>
    <ligand>
        <name>5-amino-6-(D-ribitylamino)uracil</name>
        <dbReference type="ChEBI" id="CHEBI:15934"/>
    </ligand>
</feature>
<feature type="binding site" evidence="1">
    <location>
        <begin position="81"/>
        <end position="83"/>
    </location>
    <ligand>
        <name>5-amino-6-(D-ribitylamino)uracil</name>
        <dbReference type="ChEBI" id="CHEBI:15934"/>
    </ligand>
</feature>
<feature type="binding site" evidence="1">
    <location>
        <begin position="86"/>
        <end position="87"/>
    </location>
    <ligand>
        <name>(2S)-2-hydroxy-3-oxobutyl phosphate</name>
        <dbReference type="ChEBI" id="CHEBI:58830"/>
    </ligand>
</feature>
<feature type="binding site" evidence="1">
    <location>
        <position position="114"/>
    </location>
    <ligand>
        <name>5-amino-6-(D-ribitylamino)uracil</name>
        <dbReference type="ChEBI" id="CHEBI:15934"/>
    </ligand>
</feature>
<feature type="binding site" evidence="1">
    <location>
        <position position="128"/>
    </location>
    <ligand>
        <name>(2S)-2-hydroxy-3-oxobutyl phosphate</name>
        <dbReference type="ChEBI" id="CHEBI:58830"/>
    </ligand>
</feature>
<protein>
    <recommendedName>
        <fullName evidence="1">6,7-dimethyl-8-ribityllumazine synthase</fullName>
        <shortName evidence="1">DMRL synthase</shortName>
        <shortName evidence="1">LS</shortName>
        <shortName evidence="1">Lumazine synthase</shortName>
        <ecNumber evidence="1">2.5.1.78</ecNumber>
    </recommendedName>
</protein>
<name>RISB_HALH5</name>
<evidence type="ECO:0000255" key="1">
    <source>
        <dbReference type="HAMAP-Rule" id="MF_00178"/>
    </source>
</evidence>
<sequence length="156" mass="16353">MGQTFEGHLVAEGLKVGIVVGRFNEFITSKLLGGAEDALRRHGASEADVDVAWVPGAFEIPFAAKKMAESGKYDAIITLGTVIRGSTPHFDYVCNEVAKGVGALNMSTGIPVIFGVLTTDTIEQAVERAGTKAGNKGWEAAAAAIEMANLSKELSK</sequence>
<dbReference type="EC" id="2.5.1.78" evidence="1"/>
<dbReference type="EMBL" id="BA000004">
    <property type="protein sequence ID" value="BAB05276.1"/>
    <property type="molecule type" value="Genomic_DNA"/>
</dbReference>
<dbReference type="PIR" id="E83844">
    <property type="entry name" value="E83844"/>
</dbReference>
<dbReference type="RefSeq" id="WP_010897720.1">
    <property type="nucleotide sequence ID" value="NC_002570.2"/>
</dbReference>
<dbReference type="SMR" id="Q9KCL4"/>
<dbReference type="STRING" id="272558.gene:10727455"/>
<dbReference type="GeneID" id="87597177"/>
<dbReference type="KEGG" id="bha:BH1557"/>
<dbReference type="eggNOG" id="COG0054">
    <property type="taxonomic scope" value="Bacteria"/>
</dbReference>
<dbReference type="HOGENOM" id="CLU_089358_1_1_9"/>
<dbReference type="OrthoDB" id="9809709at2"/>
<dbReference type="BRENDA" id="2.5.1.78">
    <property type="organism ID" value="661"/>
</dbReference>
<dbReference type="UniPathway" id="UPA00275">
    <property type="reaction ID" value="UER00404"/>
</dbReference>
<dbReference type="Proteomes" id="UP000001258">
    <property type="component" value="Chromosome"/>
</dbReference>
<dbReference type="GO" id="GO:0005829">
    <property type="term" value="C:cytosol"/>
    <property type="evidence" value="ECO:0007669"/>
    <property type="project" value="TreeGrafter"/>
</dbReference>
<dbReference type="GO" id="GO:0009349">
    <property type="term" value="C:riboflavin synthase complex"/>
    <property type="evidence" value="ECO:0007669"/>
    <property type="project" value="InterPro"/>
</dbReference>
<dbReference type="GO" id="GO:0000906">
    <property type="term" value="F:6,7-dimethyl-8-ribityllumazine synthase activity"/>
    <property type="evidence" value="ECO:0007669"/>
    <property type="project" value="UniProtKB-UniRule"/>
</dbReference>
<dbReference type="GO" id="GO:0009231">
    <property type="term" value="P:riboflavin biosynthetic process"/>
    <property type="evidence" value="ECO:0007669"/>
    <property type="project" value="UniProtKB-UniRule"/>
</dbReference>
<dbReference type="CDD" id="cd09209">
    <property type="entry name" value="Lumazine_synthase-I"/>
    <property type="match status" value="1"/>
</dbReference>
<dbReference type="FunFam" id="3.40.50.960:FF:000001">
    <property type="entry name" value="6,7-dimethyl-8-ribityllumazine synthase"/>
    <property type="match status" value="1"/>
</dbReference>
<dbReference type="Gene3D" id="3.40.50.960">
    <property type="entry name" value="Lumazine/riboflavin synthase"/>
    <property type="match status" value="1"/>
</dbReference>
<dbReference type="HAMAP" id="MF_00178">
    <property type="entry name" value="Lumazine_synth"/>
    <property type="match status" value="1"/>
</dbReference>
<dbReference type="InterPro" id="IPR034964">
    <property type="entry name" value="LS"/>
</dbReference>
<dbReference type="InterPro" id="IPR002180">
    <property type="entry name" value="LS/RS"/>
</dbReference>
<dbReference type="InterPro" id="IPR036467">
    <property type="entry name" value="LS/RS_sf"/>
</dbReference>
<dbReference type="NCBIfam" id="TIGR00114">
    <property type="entry name" value="lumazine-synth"/>
    <property type="match status" value="1"/>
</dbReference>
<dbReference type="NCBIfam" id="NF000812">
    <property type="entry name" value="PRK00061.1-4"/>
    <property type="match status" value="1"/>
</dbReference>
<dbReference type="PANTHER" id="PTHR21058:SF0">
    <property type="entry name" value="6,7-DIMETHYL-8-RIBITYLLUMAZINE SYNTHASE"/>
    <property type="match status" value="1"/>
</dbReference>
<dbReference type="PANTHER" id="PTHR21058">
    <property type="entry name" value="6,7-DIMETHYL-8-RIBITYLLUMAZINE SYNTHASE DMRL SYNTHASE LUMAZINE SYNTHASE"/>
    <property type="match status" value="1"/>
</dbReference>
<dbReference type="Pfam" id="PF00885">
    <property type="entry name" value="DMRL_synthase"/>
    <property type="match status" value="1"/>
</dbReference>
<dbReference type="SUPFAM" id="SSF52121">
    <property type="entry name" value="Lumazine synthase"/>
    <property type="match status" value="1"/>
</dbReference>
<organism>
    <name type="scientific">Halalkalibacterium halodurans (strain ATCC BAA-125 / DSM 18197 / FERM 7344 / JCM 9153 / C-125)</name>
    <name type="common">Bacillus halodurans</name>
    <dbReference type="NCBI Taxonomy" id="272558"/>
    <lineage>
        <taxon>Bacteria</taxon>
        <taxon>Bacillati</taxon>
        <taxon>Bacillota</taxon>
        <taxon>Bacilli</taxon>
        <taxon>Bacillales</taxon>
        <taxon>Bacillaceae</taxon>
        <taxon>Halalkalibacterium (ex Joshi et al. 2022)</taxon>
    </lineage>
</organism>
<keyword id="KW-1185">Reference proteome</keyword>
<keyword id="KW-0686">Riboflavin biosynthesis</keyword>
<keyword id="KW-0808">Transferase</keyword>
<proteinExistence type="inferred from homology"/>
<reference key="1">
    <citation type="journal article" date="2000" name="Nucleic Acids Res.">
        <title>Complete genome sequence of the alkaliphilic bacterium Bacillus halodurans and genomic sequence comparison with Bacillus subtilis.</title>
        <authorList>
            <person name="Takami H."/>
            <person name="Nakasone K."/>
            <person name="Takaki Y."/>
            <person name="Maeno G."/>
            <person name="Sasaki R."/>
            <person name="Masui N."/>
            <person name="Fuji F."/>
            <person name="Hirama C."/>
            <person name="Nakamura Y."/>
            <person name="Ogasawara N."/>
            <person name="Kuhara S."/>
            <person name="Horikoshi K."/>
        </authorList>
    </citation>
    <scope>NUCLEOTIDE SEQUENCE [LARGE SCALE GENOMIC DNA]</scope>
    <source>
        <strain>ATCC BAA-125 / DSM 18197 / FERM 7344 / JCM 9153 / C-125</strain>
    </source>
</reference>